<gene>
    <name evidence="1" type="primary">hutH</name>
    <name type="ordered locus">SaurJH1_0008</name>
</gene>
<proteinExistence type="inferred from homology"/>
<organism>
    <name type="scientific">Staphylococcus aureus (strain JH1)</name>
    <dbReference type="NCBI Taxonomy" id="359787"/>
    <lineage>
        <taxon>Bacteria</taxon>
        <taxon>Bacillati</taxon>
        <taxon>Bacillota</taxon>
        <taxon>Bacilli</taxon>
        <taxon>Bacillales</taxon>
        <taxon>Staphylococcaceae</taxon>
        <taxon>Staphylococcus</taxon>
    </lineage>
</organism>
<feature type="chain" id="PRO_1000078232" description="Histidine ammonia-lyase">
    <location>
        <begin position="1"/>
        <end position="504"/>
    </location>
</feature>
<feature type="modified residue" description="2,3-didehydroalanine (Ser)" evidence="1">
    <location>
        <position position="143"/>
    </location>
</feature>
<feature type="cross-link" description="5-imidazolinone (Ala-Gly)" evidence="1">
    <location>
        <begin position="142"/>
        <end position="144"/>
    </location>
</feature>
<accession>A6TXF8</accession>
<protein>
    <recommendedName>
        <fullName evidence="1">Histidine ammonia-lyase</fullName>
        <shortName evidence="1">Histidase</shortName>
        <ecNumber evidence="1">4.3.1.3</ecNumber>
    </recommendedName>
</protein>
<name>HUTH_STAA2</name>
<evidence type="ECO:0000255" key="1">
    <source>
        <dbReference type="HAMAP-Rule" id="MF_00229"/>
    </source>
</evidence>
<sequence>MTLYLDGETLTIEDIKSFLQQQSKIEIIDDALERVKKSRAVVERIIENEETVYGITTGFGLFSDVRIDPTQYNELQVNLIRSHACGLGEPFSKEVALVMMILRLNTLLKGHSGATLELVRQLQFFINERIIPIIPQQGSLGASGDLAPLSHLALALIGEGKVLYRGEEKDSDDVLRELNRQPLNLQAKEGLALINGTQAMTAQGVISYIEAEDLGYQSEWIAALTHQSLNGIIDAYRHDVHSVRNFQEQINVAARMRDWLEGSTLTTRQAEIRVQDAYTLRCIPQIHGASFQVFNYVKQQLEFEMNAANDNPLIFEEANETFVISGGNFHGQPIAFALDHLKLGVSELANVSERRLERLVNPQLNGDLPAFLSPEPGLQSGAMIMQYAAASLVSENKTLAHPASVDSITSSANQEDHVSMGTTAARHGYQIIENARRVLAIECVIALQAAELKGVEGLSPKTRRKYEEFRSIVPSITHDRQFHKDIEAVAQYLKQSIYQTTACH</sequence>
<comment type="catalytic activity">
    <reaction evidence="1">
        <text>L-histidine = trans-urocanate + NH4(+)</text>
        <dbReference type="Rhea" id="RHEA:21232"/>
        <dbReference type="ChEBI" id="CHEBI:17771"/>
        <dbReference type="ChEBI" id="CHEBI:28938"/>
        <dbReference type="ChEBI" id="CHEBI:57595"/>
        <dbReference type="EC" id="4.3.1.3"/>
    </reaction>
</comment>
<comment type="pathway">
    <text evidence="1">Amino-acid degradation; L-histidine degradation into L-glutamate; N-formimidoyl-L-glutamate from L-histidine: step 1/3.</text>
</comment>
<comment type="subcellular location">
    <subcellularLocation>
        <location evidence="1">Cytoplasm</location>
    </subcellularLocation>
</comment>
<comment type="PTM">
    <text evidence="1">Contains an active site 4-methylidene-imidazol-5-one (MIO), which is formed autocatalytically by cyclization and dehydration of residues Ala-Ser-Gly.</text>
</comment>
<comment type="similarity">
    <text evidence="1">Belongs to the PAL/histidase family.</text>
</comment>
<keyword id="KW-0963">Cytoplasm</keyword>
<keyword id="KW-0369">Histidine metabolism</keyword>
<keyword id="KW-0456">Lyase</keyword>
<reference key="1">
    <citation type="submission" date="2007-06" db="EMBL/GenBank/DDBJ databases">
        <title>Complete sequence of chromosome of Staphylococcus aureus subsp. aureus JH1.</title>
        <authorList>
            <consortium name="US DOE Joint Genome Institute"/>
            <person name="Copeland A."/>
            <person name="Lucas S."/>
            <person name="Lapidus A."/>
            <person name="Barry K."/>
            <person name="Detter J.C."/>
            <person name="Glavina del Rio T."/>
            <person name="Hammon N."/>
            <person name="Israni S."/>
            <person name="Dalin E."/>
            <person name="Tice H."/>
            <person name="Pitluck S."/>
            <person name="Chain P."/>
            <person name="Malfatti S."/>
            <person name="Shin M."/>
            <person name="Vergez L."/>
            <person name="Schmutz J."/>
            <person name="Larimer F."/>
            <person name="Land M."/>
            <person name="Hauser L."/>
            <person name="Kyrpides N."/>
            <person name="Ivanova N."/>
            <person name="Tomasz A."/>
            <person name="Richardson P."/>
        </authorList>
    </citation>
    <scope>NUCLEOTIDE SEQUENCE [LARGE SCALE GENOMIC DNA]</scope>
    <source>
        <strain>JH1</strain>
    </source>
</reference>
<dbReference type="EC" id="4.3.1.3" evidence="1"/>
<dbReference type="EMBL" id="CP000736">
    <property type="protein sequence ID" value="ABR50876.1"/>
    <property type="molecule type" value="Genomic_DNA"/>
</dbReference>
<dbReference type="SMR" id="A6TXF8"/>
<dbReference type="KEGG" id="sah:SaurJH1_0008"/>
<dbReference type="HOGENOM" id="CLU_014801_4_0_9"/>
<dbReference type="UniPathway" id="UPA00379">
    <property type="reaction ID" value="UER00549"/>
</dbReference>
<dbReference type="GO" id="GO:0005737">
    <property type="term" value="C:cytoplasm"/>
    <property type="evidence" value="ECO:0007669"/>
    <property type="project" value="UniProtKB-SubCell"/>
</dbReference>
<dbReference type="GO" id="GO:0004397">
    <property type="term" value="F:histidine ammonia-lyase activity"/>
    <property type="evidence" value="ECO:0007669"/>
    <property type="project" value="UniProtKB-UniRule"/>
</dbReference>
<dbReference type="GO" id="GO:0019556">
    <property type="term" value="P:L-histidine catabolic process to glutamate and formamide"/>
    <property type="evidence" value="ECO:0007669"/>
    <property type="project" value="UniProtKB-UniPathway"/>
</dbReference>
<dbReference type="GO" id="GO:0019557">
    <property type="term" value="P:L-histidine catabolic process to glutamate and formate"/>
    <property type="evidence" value="ECO:0007669"/>
    <property type="project" value="UniProtKB-UniPathway"/>
</dbReference>
<dbReference type="CDD" id="cd00332">
    <property type="entry name" value="PAL-HAL"/>
    <property type="match status" value="1"/>
</dbReference>
<dbReference type="FunFam" id="1.10.275.10:FF:000008">
    <property type="entry name" value="Histidine ammonia-lyase"/>
    <property type="match status" value="1"/>
</dbReference>
<dbReference type="FunFam" id="1.20.200.10:FF:000003">
    <property type="entry name" value="Histidine ammonia-lyase"/>
    <property type="match status" value="1"/>
</dbReference>
<dbReference type="Gene3D" id="1.20.200.10">
    <property type="entry name" value="Fumarase/aspartase (Central domain)"/>
    <property type="match status" value="1"/>
</dbReference>
<dbReference type="Gene3D" id="1.10.275.10">
    <property type="entry name" value="Fumarase/aspartase (N-terminal domain)"/>
    <property type="match status" value="1"/>
</dbReference>
<dbReference type="HAMAP" id="MF_00229">
    <property type="entry name" value="His_ammonia_lyase"/>
    <property type="match status" value="1"/>
</dbReference>
<dbReference type="InterPro" id="IPR001106">
    <property type="entry name" value="Aromatic_Lyase"/>
</dbReference>
<dbReference type="InterPro" id="IPR024083">
    <property type="entry name" value="Fumarase/histidase_N"/>
</dbReference>
<dbReference type="InterPro" id="IPR005921">
    <property type="entry name" value="HutH"/>
</dbReference>
<dbReference type="InterPro" id="IPR008948">
    <property type="entry name" value="L-Aspartase-like"/>
</dbReference>
<dbReference type="InterPro" id="IPR022313">
    <property type="entry name" value="Phe/His_NH3-lyase_AS"/>
</dbReference>
<dbReference type="NCBIfam" id="TIGR01225">
    <property type="entry name" value="hutH"/>
    <property type="match status" value="1"/>
</dbReference>
<dbReference type="NCBIfam" id="NF006871">
    <property type="entry name" value="PRK09367.1"/>
    <property type="match status" value="1"/>
</dbReference>
<dbReference type="PANTHER" id="PTHR10362">
    <property type="entry name" value="HISTIDINE AMMONIA-LYASE"/>
    <property type="match status" value="1"/>
</dbReference>
<dbReference type="Pfam" id="PF00221">
    <property type="entry name" value="Lyase_aromatic"/>
    <property type="match status" value="1"/>
</dbReference>
<dbReference type="SUPFAM" id="SSF48557">
    <property type="entry name" value="L-aspartase-like"/>
    <property type="match status" value="1"/>
</dbReference>
<dbReference type="PROSITE" id="PS00488">
    <property type="entry name" value="PAL_HISTIDASE"/>
    <property type="match status" value="1"/>
</dbReference>